<evidence type="ECO:0000255" key="1">
    <source>
        <dbReference type="HAMAP-Rule" id="MF_00337"/>
    </source>
</evidence>
<dbReference type="EC" id="3.1.11.6" evidence="1"/>
<dbReference type="EMBL" id="CU928158">
    <property type="protein sequence ID" value="CAQ90098.1"/>
    <property type="molecule type" value="Genomic_DNA"/>
</dbReference>
<dbReference type="RefSeq" id="WP_001124935.1">
    <property type="nucleotide sequence ID" value="NC_011740.1"/>
</dbReference>
<dbReference type="SMR" id="B7LMG5"/>
<dbReference type="GeneID" id="75202844"/>
<dbReference type="KEGG" id="efe:EFER_2603"/>
<dbReference type="HOGENOM" id="CLU_145918_3_3_6"/>
<dbReference type="OrthoDB" id="5591562at2"/>
<dbReference type="Proteomes" id="UP000000745">
    <property type="component" value="Chromosome"/>
</dbReference>
<dbReference type="GO" id="GO:0005829">
    <property type="term" value="C:cytosol"/>
    <property type="evidence" value="ECO:0007669"/>
    <property type="project" value="TreeGrafter"/>
</dbReference>
<dbReference type="GO" id="GO:0009318">
    <property type="term" value="C:exodeoxyribonuclease VII complex"/>
    <property type="evidence" value="ECO:0007669"/>
    <property type="project" value="InterPro"/>
</dbReference>
<dbReference type="GO" id="GO:0008855">
    <property type="term" value="F:exodeoxyribonuclease VII activity"/>
    <property type="evidence" value="ECO:0007669"/>
    <property type="project" value="UniProtKB-UniRule"/>
</dbReference>
<dbReference type="GO" id="GO:0006308">
    <property type="term" value="P:DNA catabolic process"/>
    <property type="evidence" value="ECO:0007669"/>
    <property type="project" value="UniProtKB-UniRule"/>
</dbReference>
<dbReference type="FunFam" id="1.10.287.1040:FF:000001">
    <property type="entry name" value="Exodeoxyribonuclease 7 small subunit"/>
    <property type="match status" value="1"/>
</dbReference>
<dbReference type="Gene3D" id="1.10.287.1040">
    <property type="entry name" value="Exonuclease VII, small subunit"/>
    <property type="match status" value="1"/>
</dbReference>
<dbReference type="HAMAP" id="MF_00337">
    <property type="entry name" value="Exonuc_7_S"/>
    <property type="match status" value="1"/>
</dbReference>
<dbReference type="InterPro" id="IPR003761">
    <property type="entry name" value="Exonuc_VII_S"/>
</dbReference>
<dbReference type="InterPro" id="IPR037004">
    <property type="entry name" value="Exonuc_VII_ssu_sf"/>
</dbReference>
<dbReference type="NCBIfam" id="NF002137">
    <property type="entry name" value="PRK00977.1-1"/>
    <property type="match status" value="1"/>
</dbReference>
<dbReference type="NCBIfam" id="NF002140">
    <property type="entry name" value="PRK00977.1-4"/>
    <property type="match status" value="1"/>
</dbReference>
<dbReference type="NCBIfam" id="TIGR01280">
    <property type="entry name" value="xseB"/>
    <property type="match status" value="1"/>
</dbReference>
<dbReference type="PANTHER" id="PTHR34137">
    <property type="entry name" value="EXODEOXYRIBONUCLEASE 7 SMALL SUBUNIT"/>
    <property type="match status" value="1"/>
</dbReference>
<dbReference type="PANTHER" id="PTHR34137:SF1">
    <property type="entry name" value="EXODEOXYRIBONUCLEASE 7 SMALL SUBUNIT"/>
    <property type="match status" value="1"/>
</dbReference>
<dbReference type="Pfam" id="PF02609">
    <property type="entry name" value="Exonuc_VII_S"/>
    <property type="match status" value="1"/>
</dbReference>
<dbReference type="PIRSF" id="PIRSF006488">
    <property type="entry name" value="Exonuc_VII_S"/>
    <property type="match status" value="1"/>
</dbReference>
<dbReference type="SUPFAM" id="SSF116842">
    <property type="entry name" value="XseB-like"/>
    <property type="match status" value="1"/>
</dbReference>
<organism>
    <name type="scientific">Escherichia fergusonii (strain ATCC 35469 / DSM 13698 / CCUG 18766 / IAM 14443 / JCM 21226 / LMG 7866 / NBRC 102419 / NCTC 12128 / CDC 0568-73)</name>
    <dbReference type="NCBI Taxonomy" id="585054"/>
    <lineage>
        <taxon>Bacteria</taxon>
        <taxon>Pseudomonadati</taxon>
        <taxon>Pseudomonadota</taxon>
        <taxon>Gammaproteobacteria</taxon>
        <taxon>Enterobacterales</taxon>
        <taxon>Enterobacteriaceae</taxon>
        <taxon>Escherichia</taxon>
    </lineage>
</organism>
<gene>
    <name evidence="1" type="primary">xseB</name>
    <name type="ordered locus">EFER_2603</name>
</gene>
<name>EX7S_ESCF3</name>
<sequence length="80" mass="8952">MPKKNEAPASFEKALSELEQIVTRLESGDLPLEEALNEFERGVQLARQGQAKLQQAEQRVQILLSDNEDASLTPFTPDNE</sequence>
<feature type="chain" id="PRO_1000119928" description="Exodeoxyribonuclease 7 small subunit">
    <location>
        <begin position="1"/>
        <end position="80"/>
    </location>
</feature>
<keyword id="KW-0963">Cytoplasm</keyword>
<keyword id="KW-0269">Exonuclease</keyword>
<keyword id="KW-0378">Hydrolase</keyword>
<keyword id="KW-0540">Nuclease</keyword>
<proteinExistence type="inferred from homology"/>
<accession>B7LMG5</accession>
<comment type="function">
    <text evidence="1">Bidirectionally degrades single-stranded DNA into large acid-insoluble oligonucleotides, which are then degraded further into small acid-soluble oligonucleotides.</text>
</comment>
<comment type="catalytic activity">
    <reaction evidence="1">
        <text>Exonucleolytic cleavage in either 5'- to 3'- or 3'- to 5'-direction to yield nucleoside 5'-phosphates.</text>
        <dbReference type="EC" id="3.1.11.6"/>
    </reaction>
</comment>
<comment type="subunit">
    <text evidence="1">Heterooligomer composed of large and small subunits.</text>
</comment>
<comment type="subcellular location">
    <subcellularLocation>
        <location evidence="1">Cytoplasm</location>
    </subcellularLocation>
</comment>
<comment type="similarity">
    <text evidence="1">Belongs to the XseB family.</text>
</comment>
<protein>
    <recommendedName>
        <fullName evidence="1">Exodeoxyribonuclease 7 small subunit</fullName>
        <ecNumber evidence="1">3.1.11.6</ecNumber>
    </recommendedName>
    <alternativeName>
        <fullName evidence="1">Exodeoxyribonuclease VII small subunit</fullName>
        <shortName evidence="1">Exonuclease VII small subunit</shortName>
    </alternativeName>
</protein>
<reference key="1">
    <citation type="journal article" date="2009" name="PLoS Genet.">
        <title>Organised genome dynamics in the Escherichia coli species results in highly diverse adaptive paths.</title>
        <authorList>
            <person name="Touchon M."/>
            <person name="Hoede C."/>
            <person name="Tenaillon O."/>
            <person name="Barbe V."/>
            <person name="Baeriswyl S."/>
            <person name="Bidet P."/>
            <person name="Bingen E."/>
            <person name="Bonacorsi S."/>
            <person name="Bouchier C."/>
            <person name="Bouvet O."/>
            <person name="Calteau A."/>
            <person name="Chiapello H."/>
            <person name="Clermont O."/>
            <person name="Cruveiller S."/>
            <person name="Danchin A."/>
            <person name="Diard M."/>
            <person name="Dossat C."/>
            <person name="Karoui M.E."/>
            <person name="Frapy E."/>
            <person name="Garry L."/>
            <person name="Ghigo J.M."/>
            <person name="Gilles A.M."/>
            <person name="Johnson J."/>
            <person name="Le Bouguenec C."/>
            <person name="Lescat M."/>
            <person name="Mangenot S."/>
            <person name="Martinez-Jehanne V."/>
            <person name="Matic I."/>
            <person name="Nassif X."/>
            <person name="Oztas S."/>
            <person name="Petit M.A."/>
            <person name="Pichon C."/>
            <person name="Rouy Z."/>
            <person name="Ruf C.S."/>
            <person name="Schneider D."/>
            <person name="Tourret J."/>
            <person name="Vacherie B."/>
            <person name="Vallenet D."/>
            <person name="Medigue C."/>
            <person name="Rocha E.P.C."/>
            <person name="Denamur E."/>
        </authorList>
    </citation>
    <scope>NUCLEOTIDE SEQUENCE [LARGE SCALE GENOMIC DNA]</scope>
    <source>
        <strain>ATCC 35469 / DSM 13698 / BCRC 15582 / CCUG 18766 / IAM 14443 / JCM 21226 / LMG 7866 / NBRC 102419 / NCTC 12128 / CDC 0568-73</strain>
    </source>
</reference>